<dbReference type="EMBL" id="GU292942">
    <property type="protein sequence ID" value="ADB56758.1"/>
    <property type="molecule type" value="mRNA"/>
</dbReference>
<dbReference type="ArachnoServer" id="AS001592">
    <property type="toxin name" value="U11-theraphotoxin-Hhn1a"/>
</dbReference>
<dbReference type="GO" id="GO:0005576">
    <property type="term" value="C:extracellular region"/>
    <property type="evidence" value="ECO:0007669"/>
    <property type="project" value="UniProtKB-SubCell"/>
</dbReference>
<dbReference type="GO" id="GO:0019871">
    <property type="term" value="F:sodium channel inhibitor activity"/>
    <property type="evidence" value="ECO:0007669"/>
    <property type="project" value="InterPro"/>
</dbReference>
<dbReference type="GO" id="GO:0090729">
    <property type="term" value="F:toxin activity"/>
    <property type="evidence" value="ECO:0007669"/>
    <property type="project" value="UniProtKB-KW"/>
</dbReference>
<dbReference type="InterPro" id="IPR012627">
    <property type="entry name" value="Toxin_22"/>
</dbReference>
<dbReference type="Pfam" id="PF08092">
    <property type="entry name" value="Toxin_22"/>
    <property type="match status" value="1"/>
</dbReference>
<keyword id="KW-0903">Direct protein sequencing</keyword>
<keyword id="KW-1015">Disulfide bond</keyword>
<keyword id="KW-0872">Ion channel impairing toxin</keyword>
<keyword id="KW-0960">Knottin</keyword>
<keyword id="KW-0964">Secreted</keyword>
<keyword id="KW-0732">Signal</keyword>
<keyword id="KW-0800">Toxin</keyword>
<accession>D2Y265</accession>
<organism>
    <name type="scientific">Cyriopagopus hainanus</name>
    <name type="common">Chinese bird spider</name>
    <name type="synonym">Haplopelma hainanum</name>
    <dbReference type="NCBI Taxonomy" id="209901"/>
    <lineage>
        <taxon>Eukaryota</taxon>
        <taxon>Metazoa</taxon>
        <taxon>Ecdysozoa</taxon>
        <taxon>Arthropoda</taxon>
        <taxon>Chelicerata</taxon>
        <taxon>Arachnida</taxon>
        <taxon>Araneae</taxon>
        <taxon>Mygalomorphae</taxon>
        <taxon>Theraphosidae</taxon>
        <taxon>Haplopelma</taxon>
    </lineage>
</organism>
<evidence type="ECO:0000250" key="1"/>
<evidence type="ECO:0000255" key="2"/>
<evidence type="ECO:0000269" key="3">
    <source>
    </source>
</evidence>
<evidence type="ECO:0000305" key="4"/>
<comment type="function">
    <text evidence="1">Probable ion channel inhibitor.</text>
</comment>
<comment type="subcellular location">
    <subcellularLocation>
        <location>Secreted</location>
    </subcellularLocation>
</comment>
<comment type="tissue specificity">
    <text>Expressed by the venom gland.</text>
</comment>
<comment type="domain">
    <text evidence="1">The presence of a 'disulfide through disulfide knot' structurally defines this protein as a knottin.</text>
</comment>
<comment type="similarity">
    <text evidence="4">Belongs to the neurotoxin 14 (magi-1) family. 01 (HNTX-16) subfamily.</text>
</comment>
<sequence>MNTVRVTFLLVFVLAVSLGQADKDENRMEMQEKTEQGKSYLDFAENLLLQKLEELVAKLLEEDSEESRNSRQKRCIGEGVPCDENDPRCCSGLVCLKPTLHGIWYKSYYCYKK</sequence>
<reference key="1">
    <citation type="journal article" date="2010" name="J. Proteome Res.">
        <title>Molecular diversification of peptide toxins from the tarantula Haplopelma hainanum (Ornithoctonus hainana) venom based on transcriptomic, peptidomic, and genomic analyses.</title>
        <authorList>
            <person name="Tang X."/>
            <person name="Zhang Y."/>
            <person name="Hu W."/>
            <person name="Xu D."/>
            <person name="Tao H."/>
            <person name="Yang X."/>
            <person name="Li Y."/>
            <person name="Jiang L."/>
            <person name="Liang S."/>
        </authorList>
    </citation>
    <scope>NUCLEOTIDE SEQUENCE [LARGE SCALE MRNA]</scope>
    <scope>PROTEIN SEQUENCE OF 75-113</scope>
    <scope>IDENTIFICATION BY MASS SPECTROMETRY</scope>
    <source>
        <tissue>Venom</tissue>
        <tissue>Venom gland</tissue>
    </source>
</reference>
<feature type="signal peptide" evidence="2">
    <location>
        <begin position="1"/>
        <end position="21"/>
    </location>
</feature>
<feature type="propeptide" id="PRO_0000400881" evidence="3">
    <location>
        <begin position="22"/>
        <end position="74"/>
    </location>
</feature>
<feature type="peptide" id="PRO_0000400882" description="U11-theraphotoxin-Hhn1a">
    <location>
        <begin position="75"/>
        <end position="113"/>
    </location>
</feature>
<feature type="disulfide bond" evidence="1">
    <location>
        <begin position="75"/>
        <end position="90"/>
    </location>
</feature>
<feature type="disulfide bond" evidence="1">
    <location>
        <begin position="82"/>
        <end position="95"/>
    </location>
</feature>
<feature type="disulfide bond" evidence="1">
    <location>
        <begin position="89"/>
        <end position="110"/>
    </location>
</feature>
<proteinExistence type="evidence at protein level"/>
<protein>
    <recommendedName>
        <fullName>U11-theraphotoxin-Hhn1a</fullName>
        <shortName>U11-TRTX-Hhn1a</shortName>
    </recommendedName>
    <alternativeName>
        <fullName>Hainantoxin-XVI.13</fullName>
        <shortName>HNTX-XVI.13</shortName>
    </alternativeName>
    <alternativeName>
        <fullName>Peptide F4-19.87</fullName>
    </alternativeName>
</protein>
<name>H1613_CYRHA</name>